<dbReference type="EC" id="6.3.4.2" evidence="1"/>
<dbReference type="EMBL" id="CP001043">
    <property type="protein sequence ID" value="ACC70623.1"/>
    <property type="molecule type" value="Genomic_DNA"/>
</dbReference>
<dbReference type="RefSeq" id="WP_012400836.1">
    <property type="nucleotide sequence ID" value="NC_010622.1"/>
</dbReference>
<dbReference type="SMR" id="B2JIX2"/>
<dbReference type="STRING" id="391038.Bphy_1441"/>
<dbReference type="MEROPS" id="C26.964"/>
<dbReference type="KEGG" id="bph:Bphy_1441"/>
<dbReference type="eggNOG" id="COG0504">
    <property type="taxonomic scope" value="Bacteria"/>
</dbReference>
<dbReference type="HOGENOM" id="CLU_011675_5_0_4"/>
<dbReference type="OrthoDB" id="9801107at2"/>
<dbReference type="UniPathway" id="UPA00159">
    <property type="reaction ID" value="UER00277"/>
</dbReference>
<dbReference type="Proteomes" id="UP000001192">
    <property type="component" value="Chromosome 1"/>
</dbReference>
<dbReference type="GO" id="GO:0005829">
    <property type="term" value="C:cytosol"/>
    <property type="evidence" value="ECO:0007669"/>
    <property type="project" value="TreeGrafter"/>
</dbReference>
<dbReference type="GO" id="GO:0005524">
    <property type="term" value="F:ATP binding"/>
    <property type="evidence" value="ECO:0007669"/>
    <property type="project" value="UniProtKB-KW"/>
</dbReference>
<dbReference type="GO" id="GO:0003883">
    <property type="term" value="F:CTP synthase activity"/>
    <property type="evidence" value="ECO:0007669"/>
    <property type="project" value="UniProtKB-UniRule"/>
</dbReference>
<dbReference type="GO" id="GO:0004359">
    <property type="term" value="F:glutaminase activity"/>
    <property type="evidence" value="ECO:0007669"/>
    <property type="project" value="RHEA"/>
</dbReference>
<dbReference type="GO" id="GO:0042802">
    <property type="term" value="F:identical protein binding"/>
    <property type="evidence" value="ECO:0007669"/>
    <property type="project" value="TreeGrafter"/>
</dbReference>
<dbReference type="GO" id="GO:0046872">
    <property type="term" value="F:metal ion binding"/>
    <property type="evidence" value="ECO:0007669"/>
    <property type="project" value="UniProtKB-KW"/>
</dbReference>
<dbReference type="GO" id="GO:0044210">
    <property type="term" value="P:'de novo' CTP biosynthetic process"/>
    <property type="evidence" value="ECO:0007669"/>
    <property type="project" value="UniProtKB-UniRule"/>
</dbReference>
<dbReference type="GO" id="GO:0019856">
    <property type="term" value="P:pyrimidine nucleobase biosynthetic process"/>
    <property type="evidence" value="ECO:0007669"/>
    <property type="project" value="TreeGrafter"/>
</dbReference>
<dbReference type="CDD" id="cd03113">
    <property type="entry name" value="CTPS_N"/>
    <property type="match status" value="1"/>
</dbReference>
<dbReference type="CDD" id="cd01746">
    <property type="entry name" value="GATase1_CTP_Synthase"/>
    <property type="match status" value="1"/>
</dbReference>
<dbReference type="FunFam" id="3.40.50.300:FF:000009">
    <property type="entry name" value="CTP synthase"/>
    <property type="match status" value="1"/>
</dbReference>
<dbReference type="FunFam" id="3.40.50.880:FF:000002">
    <property type="entry name" value="CTP synthase"/>
    <property type="match status" value="1"/>
</dbReference>
<dbReference type="Gene3D" id="3.40.50.880">
    <property type="match status" value="1"/>
</dbReference>
<dbReference type="Gene3D" id="3.40.50.300">
    <property type="entry name" value="P-loop containing nucleotide triphosphate hydrolases"/>
    <property type="match status" value="1"/>
</dbReference>
<dbReference type="HAMAP" id="MF_01227">
    <property type="entry name" value="PyrG"/>
    <property type="match status" value="1"/>
</dbReference>
<dbReference type="InterPro" id="IPR029062">
    <property type="entry name" value="Class_I_gatase-like"/>
</dbReference>
<dbReference type="InterPro" id="IPR004468">
    <property type="entry name" value="CTP_synthase"/>
</dbReference>
<dbReference type="InterPro" id="IPR017456">
    <property type="entry name" value="CTP_synthase_N"/>
</dbReference>
<dbReference type="InterPro" id="IPR017926">
    <property type="entry name" value="GATASE"/>
</dbReference>
<dbReference type="InterPro" id="IPR033828">
    <property type="entry name" value="GATase1_CTP_Synthase"/>
</dbReference>
<dbReference type="InterPro" id="IPR027417">
    <property type="entry name" value="P-loop_NTPase"/>
</dbReference>
<dbReference type="NCBIfam" id="NF003792">
    <property type="entry name" value="PRK05380.1"/>
    <property type="match status" value="1"/>
</dbReference>
<dbReference type="NCBIfam" id="TIGR00337">
    <property type="entry name" value="PyrG"/>
    <property type="match status" value="1"/>
</dbReference>
<dbReference type="PANTHER" id="PTHR11550">
    <property type="entry name" value="CTP SYNTHASE"/>
    <property type="match status" value="1"/>
</dbReference>
<dbReference type="PANTHER" id="PTHR11550:SF0">
    <property type="entry name" value="CTP SYNTHASE-RELATED"/>
    <property type="match status" value="1"/>
</dbReference>
<dbReference type="Pfam" id="PF06418">
    <property type="entry name" value="CTP_synth_N"/>
    <property type="match status" value="1"/>
</dbReference>
<dbReference type="Pfam" id="PF00117">
    <property type="entry name" value="GATase"/>
    <property type="match status" value="1"/>
</dbReference>
<dbReference type="SUPFAM" id="SSF52317">
    <property type="entry name" value="Class I glutamine amidotransferase-like"/>
    <property type="match status" value="1"/>
</dbReference>
<dbReference type="SUPFAM" id="SSF52540">
    <property type="entry name" value="P-loop containing nucleoside triphosphate hydrolases"/>
    <property type="match status" value="1"/>
</dbReference>
<dbReference type="PROSITE" id="PS51273">
    <property type="entry name" value="GATASE_TYPE_1"/>
    <property type="match status" value="1"/>
</dbReference>
<comment type="function">
    <text evidence="1">Catalyzes the ATP-dependent amination of UTP to CTP with either L-glutamine or ammonia as the source of nitrogen. Regulates intracellular CTP levels through interactions with the four ribonucleotide triphosphates.</text>
</comment>
<comment type="catalytic activity">
    <reaction evidence="1">
        <text>UTP + L-glutamine + ATP + H2O = CTP + L-glutamate + ADP + phosphate + 2 H(+)</text>
        <dbReference type="Rhea" id="RHEA:26426"/>
        <dbReference type="ChEBI" id="CHEBI:15377"/>
        <dbReference type="ChEBI" id="CHEBI:15378"/>
        <dbReference type="ChEBI" id="CHEBI:29985"/>
        <dbReference type="ChEBI" id="CHEBI:30616"/>
        <dbReference type="ChEBI" id="CHEBI:37563"/>
        <dbReference type="ChEBI" id="CHEBI:43474"/>
        <dbReference type="ChEBI" id="CHEBI:46398"/>
        <dbReference type="ChEBI" id="CHEBI:58359"/>
        <dbReference type="ChEBI" id="CHEBI:456216"/>
        <dbReference type="EC" id="6.3.4.2"/>
    </reaction>
</comment>
<comment type="catalytic activity">
    <reaction evidence="1">
        <text>L-glutamine + H2O = L-glutamate + NH4(+)</text>
        <dbReference type="Rhea" id="RHEA:15889"/>
        <dbReference type="ChEBI" id="CHEBI:15377"/>
        <dbReference type="ChEBI" id="CHEBI:28938"/>
        <dbReference type="ChEBI" id="CHEBI:29985"/>
        <dbReference type="ChEBI" id="CHEBI:58359"/>
    </reaction>
</comment>
<comment type="catalytic activity">
    <reaction evidence="1">
        <text>UTP + NH4(+) + ATP = CTP + ADP + phosphate + 2 H(+)</text>
        <dbReference type="Rhea" id="RHEA:16597"/>
        <dbReference type="ChEBI" id="CHEBI:15378"/>
        <dbReference type="ChEBI" id="CHEBI:28938"/>
        <dbReference type="ChEBI" id="CHEBI:30616"/>
        <dbReference type="ChEBI" id="CHEBI:37563"/>
        <dbReference type="ChEBI" id="CHEBI:43474"/>
        <dbReference type="ChEBI" id="CHEBI:46398"/>
        <dbReference type="ChEBI" id="CHEBI:456216"/>
    </reaction>
</comment>
<comment type="activity regulation">
    <text evidence="1">Allosterically activated by GTP, when glutamine is the substrate; GTP has no effect on the reaction when ammonia is the substrate. The allosteric effector GTP functions by stabilizing the protein conformation that binds the tetrahedral intermediate(s) formed during glutamine hydrolysis. Inhibited by the product CTP, via allosteric rather than competitive inhibition.</text>
</comment>
<comment type="pathway">
    <text evidence="1">Pyrimidine metabolism; CTP biosynthesis via de novo pathway; CTP from UDP: step 2/2.</text>
</comment>
<comment type="subunit">
    <text evidence="1">Homotetramer.</text>
</comment>
<comment type="miscellaneous">
    <text evidence="1">CTPSs have evolved a hybrid strategy for distinguishing between UTP and CTP. The overlapping regions of the product feedback inhibitory and substrate sites recognize a common feature in both compounds, the triphosphate moiety. To differentiate isosteric substrate and product pyrimidine rings, an additional pocket far from the expected kinase/ligase catalytic site, specifically recognizes the cytosine and ribose portions of the product inhibitor.</text>
</comment>
<comment type="similarity">
    <text evidence="1">Belongs to the CTP synthase family.</text>
</comment>
<reference key="1">
    <citation type="journal article" date="2014" name="Stand. Genomic Sci.">
        <title>Complete genome sequence of Burkholderia phymatum STM815(T), a broad host range and efficient nitrogen-fixing symbiont of Mimosa species.</title>
        <authorList>
            <person name="Moulin L."/>
            <person name="Klonowska A."/>
            <person name="Caroline B."/>
            <person name="Booth K."/>
            <person name="Vriezen J.A."/>
            <person name="Melkonian R."/>
            <person name="James E.K."/>
            <person name="Young J.P."/>
            <person name="Bena G."/>
            <person name="Hauser L."/>
            <person name="Land M."/>
            <person name="Kyrpides N."/>
            <person name="Bruce D."/>
            <person name="Chain P."/>
            <person name="Copeland A."/>
            <person name="Pitluck S."/>
            <person name="Woyke T."/>
            <person name="Lizotte-Waniewski M."/>
            <person name="Bristow J."/>
            <person name="Riley M."/>
        </authorList>
    </citation>
    <scope>NUCLEOTIDE SEQUENCE [LARGE SCALE GENOMIC DNA]</scope>
    <source>
        <strain>DSM 17167 / CIP 108236 / LMG 21445 / STM815</strain>
    </source>
</reference>
<organism>
    <name type="scientific">Paraburkholderia phymatum (strain DSM 17167 / CIP 108236 / LMG 21445 / STM815)</name>
    <name type="common">Burkholderia phymatum</name>
    <dbReference type="NCBI Taxonomy" id="391038"/>
    <lineage>
        <taxon>Bacteria</taxon>
        <taxon>Pseudomonadati</taxon>
        <taxon>Pseudomonadota</taxon>
        <taxon>Betaproteobacteria</taxon>
        <taxon>Burkholderiales</taxon>
        <taxon>Burkholderiaceae</taxon>
        <taxon>Paraburkholderia</taxon>
    </lineage>
</organism>
<protein>
    <recommendedName>
        <fullName evidence="1">CTP synthase</fullName>
        <ecNumber evidence="1">6.3.4.2</ecNumber>
    </recommendedName>
    <alternativeName>
        <fullName evidence="1">Cytidine 5'-triphosphate synthase</fullName>
    </alternativeName>
    <alternativeName>
        <fullName evidence="1">Cytidine triphosphate synthetase</fullName>
        <shortName evidence="1">CTP synthetase</shortName>
        <shortName evidence="1">CTPS</shortName>
    </alternativeName>
    <alternativeName>
        <fullName evidence="1">UTP--ammonia ligase</fullName>
    </alternativeName>
</protein>
<accession>B2JIX2</accession>
<evidence type="ECO:0000255" key="1">
    <source>
        <dbReference type="HAMAP-Rule" id="MF_01227"/>
    </source>
</evidence>
<gene>
    <name evidence="1" type="primary">pyrG</name>
    <name type="ordered locus">Bphy_1441</name>
</gene>
<keyword id="KW-0067">ATP-binding</keyword>
<keyword id="KW-0315">Glutamine amidotransferase</keyword>
<keyword id="KW-0436">Ligase</keyword>
<keyword id="KW-0460">Magnesium</keyword>
<keyword id="KW-0479">Metal-binding</keyword>
<keyword id="KW-0547">Nucleotide-binding</keyword>
<keyword id="KW-0665">Pyrimidine biosynthesis</keyword>
<keyword id="KW-1185">Reference proteome</keyword>
<name>PYRG_PARP8</name>
<proteinExistence type="inferred from homology"/>
<sequence length="553" mass="61565">MTKYVFVTGGVVSSLGKGIAAASLAAILESRGLKVTLLKLDPYINVDPGTMSPFQHGEVFVTEDGAETDLDLGHYERFISTKMRKANNFTTGQIYESVIRKERRGDYLGKTVQVIPHITNEIQAFVERGAASATCGEPDVAIVEVGGTVGDIESLPFLEAARQMSLRLGRNSACFVHLTLVPFIATAGELKTKPTQHSVQKLREIGIYPNVLLCRADRRIPDDERAKISMFSNVPEDAVISVWDVDSIYKIPQMLHDQGLDELICEELKLTARPADLSIWSEMVEKLENPKSEVTIGMVGKYVELTESYKSLIEALRHASIHTSTKVNIEYIDSEELEENGVDSLKHLDAVLVPGGFGRRGTEGKIKAIRYAREAKVPYLGICLGMQLAVIEFARDVVGLKDANSTEFDQDTPNRVVALITEWYDREGKVEKRTEESDLGGTMRLGSQRCPIKPGTMAEEIYGKDVNERHRHRYEVNNRFVPQLEGGGLIISARTPSEDLPEMMELPRSMHPWFVGVQFHPEFTSTPRDGHPLFKAFVEAARAHHEASVEEKV</sequence>
<feature type="chain" id="PRO_1000139405" description="CTP synthase">
    <location>
        <begin position="1"/>
        <end position="553"/>
    </location>
</feature>
<feature type="domain" description="Glutamine amidotransferase type-1" evidence="1">
    <location>
        <begin position="295"/>
        <end position="547"/>
    </location>
</feature>
<feature type="region of interest" description="Amidoligase domain" evidence="1">
    <location>
        <begin position="1"/>
        <end position="270"/>
    </location>
</feature>
<feature type="active site" description="Nucleophile; for glutamine hydrolysis" evidence="1">
    <location>
        <position position="383"/>
    </location>
</feature>
<feature type="active site" evidence="1">
    <location>
        <position position="520"/>
    </location>
</feature>
<feature type="active site" evidence="1">
    <location>
        <position position="522"/>
    </location>
</feature>
<feature type="binding site" evidence="1">
    <location>
        <position position="13"/>
    </location>
    <ligand>
        <name>CTP</name>
        <dbReference type="ChEBI" id="CHEBI:37563"/>
        <note>allosteric inhibitor</note>
    </ligand>
</feature>
<feature type="binding site" evidence="1">
    <location>
        <position position="13"/>
    </location>
    <ligand>
        <name>UTP</name>
        <dbReference type="ChEBI" id="CHEBI:46398"/>
    </ligand>
</feature>
<feature type="binding site" evidence="1">
    <location>
        <begin position="14"/>
        <end position="19"/>
    </location>
    <ligand>
        <name>ATP</name>
        <dbReference type="ChEBI" id="CHEBI:30616"/>
    </ligand>
</feature>
<feature type="binding site" evidence="1">
    <location>
        <position position="71"/>
    </location>
    <ligand>
        <name>ATP</name>
        <dbReference type="ChEBI" id="CHEBI:30616"/>
    </ligand>
</feature>
<feature type="binding site" evidence="1">
    <location>
        <position position="71"/>
    </location>
    <ligand>
        <name>Mg(2+)</name>
        <dbReference type="ChEBI" id="CHEBI:18420"/>
    </ligand>
</feature>
<feature type="binding site" evidence="1">
    <location>
        <position position="144"/>
    </location>
    <ligand>
        <name>Mg(2+)</name>
        <dbReference type="ChEBI" id="CHEBI:18420"/>
    </ligand>
</feature>
<feature type="binding site" evidence="1">
    <location>
        <begin position="151"/>
        <end position="153"/>
    </location>
    <ligand>
        <name>CTP</name>
        <dbReference type="ChEBI" id="CHEBI:37563"/>
        <note>allosteric inhibitor</note>
    </ligand>
</feature>
<feature type="binding site" evidence="1">
    <location>
        <begin position="191"/>
        <end position="196"/>
    </location>
    <ligand>
        <name>CTP</name>
        <dbReference type="ChEBI" id="CHEBI:37563"/>
        <note>allosteric inhibitor</note>
    </ligand>
</feature>
<feature type="binding site" evidence="1">
    <location>
        <begin position="191"/>
        <end position="196"/>
    </location>
    <ligand>
        <name>UTP</name>
        <dbReference type="ChEBI" id="CHEBI:46398"/>
    </ligand>
</feature>
<feature type="binding site" evidence="1">
    <location>
        <position position="227"/>
    </location>
    <ligand>
        <name>CTP</name>
        <dbReference type="ChEBI" id="CHEBI:37563"/>
        <note>allosteric inhibitor</note>
    </ligand>
</feature>
<feature type="binding site" evidence="1">
    <location>
        <position position="227"/>
    </location>
    <ligand>
        <name>UTP</name>
        <dbReference type="ChEBI" id="CHEBI:46398"/>
    </ligand>
</feature>
<feature type="binding site" evidence="1">
    <location>
        <position position="356"/>
    </location>
    <ligand>
        <name>L-glutamine</name>
        <dbReference type="ChEBI" id="CHEBI:58359"/>
    </ligand>
</feature>
<feature type="binding site" evidence="1">
    <location>
        <begin position="384"/>
        <end position="387"/>
    </location>
    <ligand>
        <name>L-glutamine</name>
        <dbReference type="ChEBI" id="CHEBI:58359"/>
    </ligand>
</feature>
<feature type="binding site" evidence="1">
    <location>
        <position position="407"/>
    </location>
    <ligand>
        <name>L-glutamine</name>
        <dbReference type="ChEBI" id="CHEBI:58359"/>
    </ligand>
</feature>
<feature type="binding site" evidence="1">
    <location>
        <position position="473"/>
    </location>
    <ligand>
        <name>L-glutamine</name>
        <dbReference type="ChEBI" id="CHEBI:58359"/>
    </ligand>
</feature>